<reference key="1">
    <citation type="journal article" date="1998" name="DNA Res.">
        <title>Structural analysis of Arabidopsis thaliana chromosome 5. VII. Sequence features of the regions of 1,013,767 bp covered by sixteen physically assigned P1 and TAC clones.</title>
        <authorList>
            <person name="Nakamura Y."/>
            <person name="Sato S."/>
            <person name="Asamizu E."/>
            <person name="Kaneko T."/>
            <person name="Kotani H."/>
            <person name="Miyajima N."/>
            <person name="Tabata S."/>
        </authorList>
    </citation>
    <scope>NUCLEOTIDE SEQUENCE [LARGE SCALE GENOMIC DNA]</scope>
    <source>
        <strain>cv. Columbia</strain>
    </source>
</reference>
<reference key="2">
    <citation type="journal article" date="2017" name="Plant J.">
        <title>Araport11: a complete reannotation of the Arabidopsis thaliana reference genome.</title>
        <authorList>
            <person name="Cheng C.Y."/>
            <person name="Krishnakumar V."/>
            <person name="Chan A.P."/>
            <person name="Thibaud-Nissen F."/>
            <person name="Schobel S."/>
            <person name="Town C.D."/>
        </authorList>
    </citation>
    <scope>GENOME REANNOTATION</scope>
    <source>
        <strain>cv. Columbia</strain>
    </source>
</reference>
<reference key="3">
    <citation type="submission" date="2006-05" db="EMBL/GenBank/DDBJ databases">
        <title>Arabidopsis ORF clones.</title>
        <authorList>
            <person name="Quinitio C."/>
            <person name="Chen H."/>
            <person name="Kim C.J."/>
            <person name="Shinn P."/>
            <person name="Ecker J.R."/>
        </authorList>
    </citation>
    <scope>NUCLEOTIDE SEQUENCE [LARGE SCALE MRNA] (ISOFORM 1)</scope>
    <source>
        <strain>cv. Columbia</strain>
    </source>
</reference>
<reference key="4">
    <citation type="submission" date="2002-03" db="EMBL/GenBank/DDBJ databases">
        <title>Full-length cDNA from Arabidopsis thaliana.</title>
        <authorList>
            <person name="Brover V.V."/>
            <person name="Troukhan M.E."/>
            <person name="Alexandrov N.A."/>
            <person name="Lu Y.-P."/>
            <person name="Flavell R.B."/>
            <person name="Feldmann K.A."/>
        </authorList>
    </citation>
    <scope>NUCLEOTIDE SEQUENCE [LARGE SCALE MRNA] (ISOFORM 2)</scope>
    <source>
        <strain evidence="5">cv. Columbia</strain>
    </source>
</reference>
<reference key="5">
    <citation type="journal article" date="2004" name="Plant Mol. Biol.">
        <title>Mitochondrial cytochrome c oxidase and succinate dehydrogenase complexes contain plant specific subunits.</title>
        <authorList>
            <person name="Millar A.H."/>
            <person name="Eubel H."/>
            <person name="Jansch L."/>
            <person name="Kruft V."/>
            <person name="Heazlewood J.L."/>
            <person name="Braun H.P."/>
        </authorList>
    </citation>
    <scope>PROTEIN SEQUENCE OF 33-48</scope>
    <scope>IDENTIFICATION BY MASS SPECTROMETRY</scope>
    <scope>SUBUNIT</scope>
</reference>
<name>SDH7B_ARATH</name>
<evidence type="ECO:0000256" key="1">
    <source>
        <dbReference type="SAM" id="MobiDB-lite"/>
    </source>
</evidence>
<evidence type="ECO:0000269" key="2">
    <source>
    </source>
</evidence>
<evidence type="ECO:0000305" key="3"/>
<evidence type="ECO:0000312" key="4">
    <source>
        <dbReference type="Araport" id="AT5G62575"/>
    </source>
</evidence>
<evidence type="ECO:0000312" key="5">
    <source>
        <dbReference type="Proteomes" id="UP000006548"/>
    </source>
</evidence>
<feature type="transit peptide" description="Mitochondrion" evidence="2">
    <location>
        <begin position="1"/>
        <end position="32"/>
    </location>
</feature>
<feature type="chain" id="PRO_0000431755" description="Succinate dehydrogenase subunit 7B, mitochondrial" evidence="2">
    <location>
        <begin position="33"/>
        <end position="100"/>
    </location>
</feature>
<feature type="region of interest" description="Disordered" evidence="1">
    <location>
        <begin position="1"/>
        <end position="25"/>
    </location>
</feature>
<feature type="compositionally biased region" description="Low complexity" evidence="1">
    <location>
        <begin position="9"/>
        <end position="19"/>
    </location>
</feature>
<feature type="splice variant" id="VSP_057374" description="In isoform 2." evidence="3">
    <location>
        <position position="21"/>
    </location>
</feature>
<organism>
    <name type="scientific">Arabidopsis thaliana</name>
    <name type="common">Mouse-ear cress</name>
    <dbReference type="NCBI Taxonomy" id="3702"/>
    <lineage>
        <taxon>Eukaryota</taxon>
        <taxon>Viridiplantae</taxon>
        <taxon>Streptophyta</taxon>
        <taxon>Embryophyta</taxon>
        <taxon>Tracheophyta</taxon>
        <taxon>Spermatophyta</taxon>
        <taxon>Magnoliopsida</taxon>
        <taxon>eudicotyledons</taxon>
        <taxon>Gunneridae</taxon>
        <taxon>Pentapetalae</taxon>
        <taxon>rosids</taxon>
        <taxon>malvids</taxon>
        <taxon>Brassicales</taxon>
        <taxon>Brassicaceae</taxon>
        <taxon>Camelineae</taxon>
        <taxon>Arabidopsis</taxon>
    </lineage>
</organism>
<accession>Q3E870</accession>
<accession>Q8LBU0</accession>
<keyword id="KW-0025">Alternative splicing</keyword>
<keyword id="KW-0903">Direct protein sequencing</keyword>
<keyword id="KW-0472">Membrane</keyword>
<keyword id="KW-0496">Mitochondrion</keyword>
<keyword id="KW-0999">Mitochondrion inner membrane</keyword>
<keyword id="KW-1185">Reference proteome</keyword>
<keyword id="KW-0809">Transit peptide</keyword>
<keyword id="KW-0816">Tricarboxylic acid cycle</keyword>
<sequence length="100" mass="10860">MAFLLNNASISSHLRSSSSQKTGDALSISRRGFHIEPGTREKALLAEDSALKRFKSHKKSVHKLKRIGDVLTVVVVAGCCYEIYVKAVMKKEALAAGKSS</sequence>
<proteinExistence type="evidence at protein level"/>
<dbReference type="EMBL" id="AB015469">
    <property type="status" value="NOT_ANNOTATED_CDS"/>
    <property type="molecule type" value="Genomic_DNA"/>
</dbReference>
<dbReference type="EMBL" id="CP002688">
    <property type="protein sequence ID" value="AED97625.1"/>
    <property type="molecule type" value="Genomic_DNA"/>
</dbReference>
<dbReference type="EMBL" id="CP002688">
    <property type="protein sequence ID" value="AED97626.1"/>
    <property type="molecule type" value="Genomic_DNA"/>
</dbReference>
<dbReference type="EMBL" id="BT025578">
    <property type="protein sequence ID" value="ABF58996.1"/>
    <property type="molecule type" value="mRNA"/>
</dbReference>
<dbReference type="EMBL" id="AY086998">
    <property type="protein sequence ID" value="AAM64559.1"/>
    <property type="molecule type" value="mRNA"/>
</dbReference>
<dbReference type="RefSeq" id="NP_568957.1">
    <molecule id="Q3E870-2"/>
    <property type="nucleotide sequence ID" value="NM_125652.1"/>
</dbReference>
<dbReference type="RefSeq" id="NP_974982.1">
    <molecule id="Q3E870-1"/>
    <property type="nucleotide sequence ID" value="NM_203253.3"/>
</dbReference>
<dbReference type="FunCoup" id="Q3E870">
    <property type="interactions" value="1055"/>
</dbReference>
<dbReference type="STRING" id="3702.Q3E870"/>
<dbReference type="PaxDb" id="3702-AT5G62575.2"/>
<dbReference type="ProteomicsDB" id="232891">
    <molecule id="Q3E870-1"/>
</dbReference>
<dbReference type="EnsemblPlants" id="AT5G62575.1">
    <molecule id="Q3E870-2"/>
    <property type="protein sequence ID" value="AT5G62575.1"/>
    <property type="gene ID" value="AT5G62575"/>
</dbReference>
<dbReference type="EnsemblPlants" id="AT5G62575.2">
    <molecule id="Q3E870-1"/>
    <property type="protein sequence ID" value="AT5G62575.2"/>
    <property type="gene ID" value="AT5G62575"/>
</dbReference>
<dbReference type="GeneID" id="836378"/>
<dbReference type="Gramene" id="AT5G62575.1">
    <molecule id="Q3E870-2"/>
    <property type="protein sequence ID" value="AT5G62575.1"/>
    <property type="gene ID" value="AT5G62575"/>
</dbReference>
<dbReference type="Gramene" id="AT5G62575.2">
    <molecule id="Q3E870-1"/>
    <property type="protein sequence ID" value="AT5G62575.2"/>
    <property type="gene ID" value="AT5G62575"/>
</dbReference>
<dbReference type="KEGG" id="ath:AT5G62575"/>
<dbReference type="Araport" id="AT5G62575"/>
<dbReference type="TAIR" id="AT5G62575">
    <property type="gene designation" value="SDH7"/>
</dbReference>
<dbReference type="eggNOG" id="ENOG502S3X7">
    <property type="taxonomic scope" value="Eukaryota"/>
</dbReference>
<dbReference type="InParanoid" id="Q3E870"/>
<dbReference type="OMA" id="TNIASHF"/>
<dbReference type="OrthoDB" id="684848at2759"/>
<dbReference type="PhylomeDB" id="Q3E870"/>
<dbReference type="UniPathway" id="UPA00223"/>
<dbReference type="PRO" id="PR:Q3E870"/>
<dbReference type="Proteomes" id="UP000006548">
    <property type="component" value="Chromosome 5"/>
</dbReference>
<dbReference type="ExpressionAtlas" id="Q3E870">
    <property type="expression patterns" value="baseline and differential"/>
</dbReference>
<dbReference type="GO" id="GO:0005743">
    <property type="term" value="C:mitochondrial inner membrane"/>
    <property type="evidence" value="ECO:0007669"/>
    <property type="project" value="UniProtKB-SubCell"/>
</dbReference>
<dbReference type="GO" id="GO:0005739">
    <property type="term" value="C:mitochondrion"/>
    <property type="evidence" value="ECO:0007005"/>
    <property type="project" value="TAIR"/>
</dbReference>
<dbReference type="GO" id="GO:0009536">
    <property type="term" value="C:plastid"/>
    <property type="evidence" value="ECO:0007005"/>
    <property type="project" value="TAIR"/>
</dbReference>
<dbReference type="GO" id="GO:0045273">
    <property type="term" value="C:respiratory chain complex II (succinate dehydrogenase)"/>
    <property type="evidence" value="ECO:0000314"/>
    <property type="project" value="UniProtKB"/>
</dbReference>
<dbReference type="GO" id="GO:0043495">
    <property type="term" value="F:protein-membrane adaptor activity"/>
    <property type="evidence" value="ECO:0000314"/>
    <property type="project" value="TAIR"/>
</dbReference>
<dbReference type="GO" id="GO:0006099">
    <property type="term" value="P:tricarboxylic acid cycle"/>
    <property type="evidence" value="ECO:0007669"/>
    <property type="project" value="UniProtKB-UniPathway"/>
</dbReference>
<dbReference type="InterPro" id="IPR034573">
    <property type="entry name" value="SDH7"/>
</dbReference>
<dbReference type="PANTHER" id="PTHR36041">
    <property type="entry name" value="SUCCINATE DEHYDROGENASE SUBUNIT 7A, MITOCHONDRIAL-RELATED"/>
    <property type="match status" value="1"/>
</dbReference>
<dbReference type="PANTHER" id="PTHR36041:SF2">
    <property type="entry name" value="SUCCINATE DEHYDROGENASE SUBUNIT 7A, MITOCHONDRIAL-RELATED"/>
    <property type="match status" value="1"/>
</dbReference>
<comment type="pathway">
    <text evidence="3">Carbohydrate metabolism; tricarboxylic acid cycle.</text>
</comment>
<comment type="subunit">
    <text evidence="2">Component of complex II composed of eight subunits in plants: four classical SDH subunits SDH1, SDH2, SDH3 and SDH4 (a flavoprotein (FP), an iron-sulfur protein (IP), and a cytochrome b composed of a large and a small subunit.), as well as four subunits unknown in mitochondria from bacteria and heterotrophic eukaryotes.</text>
</comment>
<comment type="subcellular location">
    <subcellularLocation>
        <location evidence="3">Mitochondrion inner membrane</location>
        <topology evidence="3">Peripheral membrane protein</topology>
    </subcellularLocation>
</comment>
<comment type="alternative products">
    <event type="alternative splicing"/>
    <isoform>
        <id>Q3E870-1</id>
        <name>1</name>
        <sequence type="displayed"/>
    </isoform>
    <isoform>
        <id>Q3E870-2</id>
        <name>2</name>
        <sequence type="described" ref="VSP_057374"/>
    </isoform>
</comment>
<comment type="miscellaneous">
    <molecule>Isoform 2</molecule>
    <text evidence="3">May be due to a competing acceptor splice site.</text>
</comment>
<protein>
    <recommendedName>
        <fullName evidence="3">Succinate dehydrogenase subunit 7B, mitochondrial</fullName>
    </recommendedName>
</protein>
<gene>
    <name evidence="3" type="primary">SDH7B</name>
    <name evidence="4" type="ordered locus">At5g62575</name>
</gene>